<reference key="1">
    <citation type="submission" date="2003-12" db="EMBL/GenBank/DDBJ databases">
        <authorList>
            <consortium name="NIH - Xenopus Gene Collection (XGC) project"/>
        </authorList>
    </citation>
    <scope>NUCLEOTIDE SEQUENCE [LARGE SCALE MRNA]</scope>
    <source>
        <tissue>Kidney</tissue>
    </source>
</reference>
<keyword id="KW-0010">Activator</keyword>
<keyword id="KW-0539">Nucleus</keyword>
<keyword id="KW-1185">Reference proteome</keyword>
<keyword id="KW-0804">Transcription</keyword>
<keyword id="KW-0805">Transcription regulation</keyword>
<proteinExistence type="evidence at transcript level"/>
<comment type="function">
    <text evidence="1">Component of the Mediator complex, a coactivator involved in the regulated transcription of nearly all RNA polymerase II-dependent genes. Mediator functions as a bridge to convey information from gene-specific regulatory proteins to the basal RNA polymerase II transcription machinery. Mediator is recruited to promoters by direct interactions with regulatory proteins and serves as a scaffold for the assembly of a functional preinitiation complex with RNA polymerase II and the general transcription factors (By similarity).</text>
</comment>
<comment type="subunit">
    <text evidence="1">Component of the Mediator complex.</text>
</comment>
<comment type="subcellular location">
    <subcellularLocation>
        <location evidence="3">Nucleus</location>
    </subcellularLocation>
</comment>
<comment type="similarity">
    <text evidence="3">Belongs to the Mediator complex subunit 23 family.</text>
</comment>
<name>MED23_XENLA</name>
<protein>
    <recommendedName>
        <fullName>Mediator of RNA polymerase II transcription subunit 23</fullName>
    </recommendedName>
    <alternativeName>
        <fullName>Mediator complex subunit 23</fullName>
    </alternativeName>
</protein>
<gene>
    <name type="primary">med23</name>
</gene>
<dbReference type="EMBL" id="BC063725">
    <property type="protein sequence ID" value="AAH63725.1"/>
    <property type="molecule type" value="mRNA"/>
</dbReference>
<dbReference type="RefSeq" id="NP_001083684.1">
    <property type="nucleotide sequence ID" value="NM_001090215.1"/>
</dbReference>
<dbReference type="SMR" id="Q6P423"/>
<dbReference type="IntAct" id="Q6P423">
    <property type="interactions" value="2"/>
</dbReference>
<dbReference type="MINT" id="Q6P423"/>
<dbReference type="GeneID" id="399060"/>
<dbReference type="KEGG" id="xla:399060"/>
<dbReference type="AGR" id="Xenbase:XB-GENE-1003997"/>
<dbReference type="CTD" id="399060"/>
<dbReference type="Xenbase" id="XB-GENE-1003997">
    <property type="gene designation" value="med23.L"/>
</dbReference>
<dbReference type="OrthoDB" id="9982951at2759"/>
<dbReference type="Proteomes" id="UP000186698">
    <property type="component" value="Chromosome 5L"/>
</dbReference>
<dbReference type="Bgee" id="399060">
    <property type="expression patterns" value="Expressed in neurula embryo and 19 other cell types or tissues"/>
</dbReference>
<dbReference type="GO" id="GO:0016592">
    <property type="term" value="C:mediator complex"/>
    <property type="evidence" value="ECO:0000318"/>
    <property type="project" value="GO_Central"/>
</dbReference>
<dbReference type="GO" id="GO:0005667">
    <property type="term" value="C:transcription regulator complex"/>
    <property type="evidence" value="ECO:0000318"/>
    <property type="project" value="GO_Central"/>
</dbReference>
<dbReference type="GO" id="GO:0010628">
    <property type="term" value="P:positive regulation of gene expression"/>
    <property type="evidence" value="ECO:0000318"/>
    <property type="project" value="GO_Central"/>
</dbReference>
<dbReference type="GO" id="GO:0006357">
    <property type="term" value="P:regulation of transcription by RNA polymerase II"/>
    <property type="evidence" value="ECO:0000318"/>
    <property type="project" value="GO_Central"/>
</dbReference>
<dbReference type="InterPro" id="IPR021629">
    <property type="entry name" value="Mediator_Med23"/>
</dbReference>
<dbReference type="PANTHER" id="PTHR12691">
    <property type="entry name" value="MEDIATOR OF RNA POLYMERASE II TRANSCRIPTION SUBUNIT 23"/>
    <property type="match status" value="1"/>
</dbReference>
<dbReference type="PANTHER" id="PTHR12691:SF10">
    <property type="entry name" value="MEDIATOR OF RNA POLYMERASE II TRANSCRIPTION SUBUNIT 23"/>
    <property type="match status" value="1"/>
</dbReference>
<dbReference type="Pfam" id="PF11573">
    <property type="entry name" value="Med23"/>
    <property type="match status" value="1"/>
</dbReference>
<feature type="chain" id="PRO_0000305934" description="Mediator of RNA polymerase II transcription subunit 23">
    <location>
        <begin position="1"/>
        <end position="1369"/>
    </location>
</feature>
<feature type="region of interest" description="Disordered" evidence="2">
    <location>
        <begin position="1337"/>
        <end position="1369"/>
    </location>
</feature>
<feature type="compositionally biased region" description="Pro residues" evidence="2">
    <location>
        <begin position="1341"/>
        <end position="1357"/>
    </location>
</feature>
<evidence type="ECO:0000250" key="1"/>
<evidence type="ECO:0000256" key="2">
    <source>
        <dbReference type="SAM" id="MobiDB-lite"/>
    </source>
</evidence>
<evidence type="ECO:0000305" key="3"/>
<organism>
    <name type="scientific">Xenopus laevis</name>
    <name type="common">African clawed frog</name>
    <dbReference type="NCBI Taxonomy" id="8355"/>
    <lineage>
        <taxon>Eukaryota</taxon>
        <taxon>Metazoa</taxon>
        <taxon>Chordata</taxon>
        <taxon>Craniata</taxon>
        <taxon>Vertebrata</taxon>
        <taxon>Euteleostomi</taxon>
        <taxon>Amphibia</taxon>
        <taxon>Batrachia</taxon>
        <taxon>Anura</taxon>
        <taxon>Pipoidea</taxon>
        <taxon>Pipidae</taxon>
        <taxon>Xenopodinae</taxon>
        <taxon>Xenopus</taxon>
        <taxon>Xenopus</taxon>
    </lineage>
</organism>
<accession>Q6P423</accession>
<sequence length="1369" mass="156572">MESQLQSIFEEMVKTEIIEEAFAGMFMDTPEDERTKLISCLGAFRQYWSVLPQESHEQCVQWIVKFIHGQHSPKRISFLYDCLAMAVETGLLPPRMVCEALINSDSLEWERTQLWILTFKLIRKIIGGVDYKGVRDLLKVILEKIQTVPDTVSSAVVQQLLAAREVVAYILERNACLLPAYLAVTEVLKLYPEGKLPHWLLGDLVSDFVDSFRPTARIGSICGRCSLLPVVNNSGAICNSWKLDPLTLRFPLKGLLPYDKDLFEPQTALLRYVLEQPYSRDMVCNMLGLNKQHKQRCPVLEDQLVDLVVYAMERSETEEKYDDGGTSQLLWQHLSSQLIFFVLFQFASFPHMVLSLHQKLAGRGLIKGRDHLMWVLLQFISGSIQKNALADFLPVMKLFDLLYPEKECIPVPDITKPQSTHSFAMTCIWIHLNRKAQNDNSKLQIPIPHSLKLHHEFLQQSLRNKSLQMTDYKIALLCNAYSTNSECFTLPMGVLVETIYGNGNVNIPLPGSNCMASGSITPLPMNLLDSLTVHAKMSLIHSIATRVIKMAQAKSTFALAPALVETYSRLLVYMEIESLGIKGFISQLLPTVFKSHAWGILHTLLEMFSYRMHHIQPHYRVQLLSHLHSLAGVPQTNQNQLHLCVESTALRLITALGSSEVQPQFTRFLSDPKTVLSAESEELNRALILTIARATHVTDFFTGSESIQGTWCKDILQTIISFTPHNWALHTLSCFPAPLQAFFKQNNVPQESRFNLKKNVEEEYRKWKSMTNENDIITHFSLQGSPPLFLCLLWKMLLETDQINQIGYRVLERIGARALVAHVRTFADFLVYEFSTSAGGQQLNKCIEMLNDMVWKYNIVTLDRLILCLAMRSHEGNEAQVCYFIIQLLLLKPNDFRNRVSDFVKENSPEHWLQNDWHTKHMNYHKKYPEKLYFEGLAEQVNPPVQIQPQYLPIYFGNVCLRFLPVFDIVIHRFLELIPVSKSLETLLDHLGGLYKFHDRPVTYLYNTLHYYEMQLRDRTNLKRKLVHAIIGSLKDNRPQGWCLSDTYLKFGMNPRDDNPWIPDDTYYCKLIGRLVDTMAGKSPGPFPNCDWRFNEFPNPAAHALHVTCVELMALAVPGKDVGNALLNVVLKSQPLVPRENITAWMNAIGLIITALPEPYWIVLHDRIVNILNSPSLTSETEWVGYPFQLFDFTACHKAYSEMSCSYTLALAHAVWHHSSIGQLSLIPKFLPEVLIPIVKTEYQLLYVYHLIGPFLQRFQQERTRCMIEIGVAFYEMLLNVDQCSTHLSFMDPVCDFLYHMKYMFTGDSIKDQVEKIICNLRPALKLRLRHITHISTESAAPPPPPMNSGSPAPQPNQVPVSVPLTVTQ</sequence>